<proteinExistence type="evidence at protein level"/>
<reference key="1">
    <citation type="submission" date="2002-11" db="EMBL/GenBank/DDBJ databases">
        <title>Identification of complete keratin-associated protein (KAP) gene cluster spanning 800 kb region on human chromosome 21q22.11.</title>
        <authorList>
            <person name="Obayashi I."/>
            <person name="Shibuya K."/>
            <person name="Minoshima S."/>
            <person name="Kudoh J."/>
            <person name="Shimizu N."/>
        </authorList>
    </citation>
    <scope>NUCLEOTIDE SEQUENCE [MRNA]</scope>
    <source>
        <tissue>Hair root</tissue>
    </source>
</reference>
<organism>
    <name type="scientific">Homo sapiens</name>
    <name type="common">Human</name>
    <dbReference type="NCBI Taxonomy" id="9606"/>
    <lineage>
        <taxon>Eukaryota</taxon>
        <taxon>Metazoa</taxon>
        <taxon>Chordata</taxon>
        <taxon>Craniata</taxon>
        <taxon>Vertebrata</taxon>
        <taxon>Euteleostomi</taxon>
        <taxon>Mammalia</taxon>
        <taxon>Eutheria</taxon>
        <taxon>Euarchontoglires</taxon>
        <taxon>Primates</taxon>
        <taxon>Haplorrhini</taxon>
        <taxon>Catarrhini</taxon>
        <taxon>Hominidae</taxon>
        <taxon>Homo</taxon>
    </lineage>
</organism>
<protein>
    <recommendedName>
        <fullName>Keratin-associated protein 6-1</fullName>
    </recommendedName>
</protein>
<accession>Q3LI64</accession>
<sequence length="71" mass="7279">MCGSYYGNYYGTPGYGFCGYGGLGYGYGGLGCGYGSCCGCGFRRLGCGYGYGSRSLCGYGYGCGSGSGYYY</sequence>
<keyword id="KW-0416">Keratin</keyword>
<keyword id="KW-1185">Reference proteome</keyword>
<keyword id="KW-0677">Repeat</keyword>
<comment type="function">
    <text>In the hair cortex, hair keratin intermediate filaments are embedded in an interfilamentous matrix, consisting of hair keratin-associated proteins (KRTAP), which are essential for the formation of a rigid and resistant hair shaft through their extensive disulfide bond cross-linking with abundant cysteine residues of hair keratins. The matrix proteins include the high-sulfur and high-glycine-tyrosine keratins.</text>
</comment>
<comment type="subunit">
    <text evidence="1">Interacts with hair keratins.</text>
</comment>
<comment type="interaction">
    <interactant intactId="EBI-12111050">
        <id>Q3LI64</id>
    </interactant>
    <interactant intactId="EBI-12224467">
        <id>Q9NYG5-2</id>
        <label>ANAPC11</label>
    </interactant>
    <organismsDiffer>false</organismsDiffer>
    <experiments>3</experiments>
</comment>
<comment type="interaction">
    <interactant intactId="EBI-12111050">
        <id>Q3LI64</id>
    </interactant>
    <interactant intactId="EBI-12819523">
        <id>P41238</id>
        <label>APOBEC1</label>
    </interactant>
    <organismsDiffer>false</organismsDiffer>
    <experiments>3</experiments>
</comment>
<comment type="interaction">
    <interactant intactId="EBI-12111050">
        <id>Q3LI64</id>
    </interactant>
    <interactant intactId="EBI-948603">
        <id>Q03989</id>
        <label>ARID5A</label>
    </interactant>
    <organismsDiffer>false</organismsDiffer>
    <experiments>3</experiments>
</comment>
<comment type="interaction">
    <interactant intactId="EBI-12111050">
        <id>Q3LI64</id>
    </interactant>
    <interactant intactId="EBI-742750">
        <id>Q8TBE0</id>
        <label>BAHD1</label>
    </interactant>
    <organismsDiffer>false</organismsDiffer>
    <experiments>3</experiments>
</comment>
<comment type="interaction">
    <interactant intactId="EBI-12111050">
        <id>Q3LI64</id>
    </interactant>
    <interactant intactId="EBI-711810">
        <id>O14503</id>
        <label>BHLHE40</label>
    </interactant>
    <organismsDiffer>false</organismsDiffer>
    <experiments>3</experiments>
</comment>
<comment type="interaction">
    <interactant intactId="EBI-12111050">
        <id>Q3LI64</id>
    </interactant>
    <interactant intactId="EBI-1383687">
        <id>Q9UQM7</id>
        <label>CAMK2A</label>
    </interactant>
    <organismsDiffer>false</organismsDiffer>
    <experiments>3</experiments>
</comment>
<comment type="interaction">
    <interactant intactId="EBI-12111050">
        <id>Q3LI64</id>
    </interactant>
    <interactant intactId="EBI-12020154">
        <id>Q13555-5</id>
        <label>CAMK2G</label>
    </interactant>
    <organismsDiffer>false</organismsDiffer>
    <experiments>3</experiments>
</comment>
<comment type="interaction">
    <interactant intactId="EBI-12111050">
        <id>Q3LI64</id>
    </interactant>
    <interactant intactId="EBI-744545">
        <id>Q8NEC5</id>
        <label>CATSPER1</label>
    </interactant>
    <organismsDiffer>false</organismsDiffer>
    <experiments>3</experiments>
</comment>
<comment type="interaction">
    <interactant intactId="EBI-12111050">
        <id>Q3LI64</id>
    </interactant>
    <interactant intactId="EBI-744556">
        <id>Q96HB5</id>
        <label>CCDC120</label>
    </interactant>
    <organismsDiffer>false</organismsDiffer>
    <experiments>3</experiments>
</comment>
<comment type="interaction">
    <interactant intactId="EBI-12111050">
        <id>Q3LI64</id>
    </interactant>
    <interactant intactId="EBI-1104933">
        <id>Q8N4L8</id>
        <label>CCDC24</label>
    </interactant>
    <organismsDiffer>false</organismsDiffer>
    <experiments>3</experiments>
</comment>
<comment type="interaction">
    <interactant intactId="EBI-12111050">
        <id>Q3LI64</id>
    </interactant>
    <interactant intactId="EBI-9250559">
        <id>P32320</id>
        <label>CDA</label>
    </interactant>
    <organismsDiffer>false</organismsDiffer>
    <experiments>3</experiments>
</comment>
<comment type="interaction">
    <interactant intactId="EBI-12111050">
        <id>Q3LI64</id>
    </interactant>
    <interactant intactId="EBI-12139335">
        <id>Q8N6W0</id>
        <label>CELF5</label>
    </interactant>
    <organismsDiffer>false</organismsDiffer>
    <experiments>5</experiments>
</comment>
<comment type="interaction">
    <interactant intactId="EBI-12111050">
        <id>Q3LI64</id>
    </interactant>
    <interactant intactId="EBI-10192698">
        <id>Q02930-3</id>
        <label>CREB5</label>
    </interactant>
    <organismsDiffer>false</organismsDiffer>
    <experiments>5</experiments>
</comment>
<comment type="interaction">
    <interactant intactId="EBI-12111050">
        <id>Q3LI64</id>
    </interactant>
    <interactant intactId="EBI-739060">
        <id>P02511</id>
        <label>CRYAB</label>
    </interactant>
    <organismsDiffer>false</organismsDiffer>
    <experiments>3</experiments>
</comment>
<comment type="interaction">
    <interactant intactId="EBI-12111050">
        <id>Q3LI64</id>
    </interactant>
    <interactant intactId="EBI-3867333">
        <id>A8MQ03</id>
        <label>CYSRT1</label>
    </interactant>
    <organismsDiffer>false</organismsDiffer>
    <experiments>6</experiments>
</comment>
<comment type="interaction">
    <interactant intactId="EBI-12111050">
        <id>Q3LI64</id>
    </interactant>
    <interactant intactId="EBI-724310">
        <id>Q15038</id>
        <label>DAZAP2</label>
    </interactant>
    <organismsDiffer>false</organismsDiffer>
    <experiments>8</experiments>
</comment>
<comment type="interaction">
    <interactant intactId="EBI-12111050">
        <id>Q3LI64</id>
    </interactant>
    <interactant intactId="EBI-740376">
        <id>Q86UW9</id>
        <label>DTX2</label>
    </interactant>
    <organismsDiffer>false</organismsDiffer>
    <experiments>3</experiments>
</comment>
<comment type="interaction">
    <interactant intactId="EBI-12111050">
        <id>Q3LI64</id>
    </interactant>
    <interactant intactId="EBI-536772">
        <id>Q12805</id>
        <label>EFEMP1</label>
    </interactant>
    <organismsDiffer>false</organismsDiffer>
    <experiments>3</experiments>
</comment>
<comment type="interaction">
    <interactant intactId="EBI-12111050">
        <id>Q3LI64</id>
    </interactant>
    <interactant intactId="EBI-17280301">
        <id>Q03828</id>
        <label>EVX2</label>
    </interactant>
    <organismsDiffer>false</organismsDiffer>
    <experiments>3</experiments>
</comment>
<comment type="interaction">
    <interactant intactId="EBI-12111050">
        <id>Q3LI64</id>
    </interactant>
    <interactant intactId="EBI-11977403">
        <id>A0A0C3SFZ9</id>
        <label>FCHO1</label>
    </interactant>
    <organismsDiffer>false</organismsDiffer>
    <experiments>3</experiments>
</comment>
<comment type="interaction">
    <interactant intactId="EBI-12111050">
        <id>Q3LI64</id>
    </interactant>
    <interactant intactId="EBI-7251368">
        <id>Q9BZE0</id>
        <label>GLIS2</label>
    </interactant>
    <organismsDiffer>false</organismsDiffer>
    <experiments>3</experiments>
</comment>
<comment type="interaction">
    <interactant intactId="EBI-12111050">
        <id>Q3LI64</id>
    </interactant>
    <interactant intactId="EBI-12232117">
        <id>Q8NEA6-2</id>
        <label>GLIS3</label>
    </interactant>
    <organismsDiffer>false</organismsDiffer>
    <experiments>3</experiments>
</comment>
<comment type="interaction">
    <interactant intactId="EBI-12111050">
        <id>Q3LI64</id>
    </interactant>
    <interactant intactId="EBI-11975289">
        <id>Q9Y223-2</id>
        <label>GNE</label>
    </interactant>
    <organismsDiffer>false</organismsDiffer>
    <experiments>3</experiments>
</comment>
<comment type="interaction">
    <interactant intactId="EBI-12111050">
        <id>Q3LI64</id>
    </interactant>
    <interactant intactId="EBI-713355">
        <id>Q13227</id>
        <label>GPS2</label>
    </interactant>
    <organismsDiffer>false</organismsDiffer>
    <experiments>3</experiments>
</comment>
<comment type="interaction">
    <interactant intactId="EBI-12111050">
        <id>Q3LI64</id>
    </interactant>
    <interactant intactId="EBI-747754">
        <id>P28799</id>
        <label>GRN</label>
    </interactant>
    <organismsDiffer>false</organismsDiffer>
    <experiments>3</experiments>
</comment>
<comment type="interaction">
    <interactant intactId="EBI-12111050">
        <id>Q3LI64</id>
    </interactant>
    <interactant intactId="EBI-12057631">
        <id>A0A087WSW0</id>
        <label>HELT</label>
    </interactant>
    <organismsDiffer>false</organismsDiffer>
    <experiments>3</experiments>
</comment>
<comment type="interaction">
    <interactant intactId="EBI-12111050">
        <id>Q3LI64</id>
    </interactant>
    <interactant intactId="EBI-750630">
        <id>Q9UBP5</id>
        <label>HEY2</label>
    </interactant>
    <organismsDiffer>false</organismsDiffer>
    <experiments>3</experiments>
</comment>
<comment type="interaction">
    <interactant intactId="EBI-12111050">
        <id>Q3LI64</id>
    </interactant>
    <interactant intactId="EBI-747421">
        <id>Q03014</id>
        <label>HHEX</label>
    </interactant>
    <organismsDiffer>false</organismsDiffer>
    <experiments>3</experiments>
</comment>
<comment type="interaction">
    <interactant intactId="EBI-12111050">
        <id>Q3LI64</id>
    </interactant>
    <interactant intactId="EBI-740785">
        <id>P49639</id>
        <label>HOXA1</label>
    </interactant>
    <organismsDiffer>false</organismsDiffer>
    <experiments>3</experiments>
</comment>
<comment type="interaction">
    <interactant intactId="EBI-12111050">
        <id>Q3LI64</id>
    </interactant>
    <interactant intactId="EBI-1752118">
        <id>P31273</id>
        <label>HOXC8</label>
    </interactant>
    <organismsDiffer>false</organismsDiffer>
    <experiments>3</experiments>
</comment>
<comment type="interaction">
    <interactant intactId="EBI-12111050">
        <id>Q3LI64</id>
    </interactant>
    <interactant intactId="EBI-11028396">
        <id>Q6UXX5</id>
        <label>ITIH6</label>
    </interactant>
    <organismsDiffer>false</organismsDiffer>
    <experiments>3</experiments>
</comment>
<comment type="interaction">
    <interactant intactId="EBI-12111050">
        <id>Q3LI64</id>
    </interactant>
    <interactant intactId="EBI-10981970">
        <id>Q5T749</id>
        <label>KPRP</label>
    </interactant>
    <organismsDiffer>false</organismsDiffer>
    <experiments>3</experiments>
</comment>
<comment type="interaction">
    <interactant intactId="EBI-12111050">
        <id>Q3LI64</id>
    </interactant>
    <interactant intactId="EBI-1052037">
        <id>Q8IUC1</id>
        <label>KRTAP11-1</label>
    </interactant>
    <organismsDiffer>false</organismsDiffer>
    <experiments>3</experiments>
</comment>
<comment type="interaction">
    <interactant intactId="EBI-12111050">
        <id>Q3LI64</id>
    </interactant>
    <interactant intactId="EBI-10210845">
        <id>P59990</id>
        <label>KRTAP12-1</label>
    </interactant>
    <organismsDiffer>false</organismsDiffer>
    <experiments>3</experiments>
</comment>
<comment type="interaction">
    <interactant intactId="EBI-12111050">
        <id>Q3LI64</id>
    </interactant>
    <interactant intactId="EBI-11953334">
        <id>P60328</id>
        <label>KRTAP12-3</label>
    </interactant>
    <organismsDiffer>false</organismsDiffer>
    <experiments>3</experiments>
</comment>
<comment type="interaction">
    <interactant intactId="EBI-12111050">
        <id>Q3LI64</id>
    </interactant>
    <interactant intactId="EBI-3957672">
        <id>Q6PEX3</id>
        <label>KRTAP26-1</label>
    </interactant>
    <organismsDiffer>false</organismsDiffer>
    <experiments>3</experiments>
</comment>
<comment type="interaction">
    <interactant intactId="EBI-12111050">
        <id>Q3LI64</id>
    </interactant>
    <interactant intactId="EBI-9996449">
        <id>Q9BYR8</id>
        <label>KRTAP3-1</label>
    </interactant>
    <organismsDiffer>false</organismsDiffer>
    <experiments>3</experiments>
</comment>
<comment type="interaction">
    <interactant intactId="EBI-12111050">
        <id>Q3LI64</id>
    </interactant>
    <interactant intactId="EBI-11993254">
        <id>Q9BYR2</id>
        <label>KRTAP4-5</label>
    </interactant>
    <organismsDiffer>false</organismsDiffer>
    <experiments>3</experiments>
</comment>
<comment type="interaction">
    <interactant intactId="EBI-12111050">
        <id>Q3LI64</id>
    </interactant>
    <interactant intactId="EBI-11962084">
        <id>Q3LI66</id>
        <label>KRTAP6-2</label>
    </interactant>
    <organismsDiffer>false</organismsDiffer>
    <experiments>3</experiments>
</comment>
<comment type="interaction">
    <interactant intactId="EBI-12111050">
        <id>Q3LI64</id>
    </interactant>
    <interactant intactId="EBI-22311199">
        <id>Q3LI67</id>
        <label>KRTAP6-3</label>
    </interactant>
    <organismsDiffer>false</organismsDiffer>
    <experiments>3</experiments>
</comment>
<comment type="interaction">
    <interactant intactId="EBI-12111050">
        <id>Q3LI64</id>
    </interactant>
    <interactant intactId="EBI-2341787">
        <id>Q17RB8</id>
        <label>LONRF1</label>
    </interactant>
    <organismsDiffer>false</organismsDiffer>
    <experiments>3</experiments>
</comment>
<comment type="interaction">
    <interactant intactId="EBI-12111050">
        <id>Q3LI64</id>
    </interactant>
    <interactant intactId="EBI-716006">
        <id>Q9Y5V3</id>
        <label>MAGED1</label>
    </interactant>
    <organismsDiffer>false</organismsDiffer>
    <experiments>3</experiments>
</comment>
<comment type="interaction">
    <interactant intactId="EBI-12111050">
        <id>Q3LI64</id>
    </interactant>
    <interactant intactId="EBI-741424">
        <id>Q8NDC0</id>
        <label>MAPK1IP1L</label>
    </interactant>
    <organismsDiffer>false</organismsDiffer>
    <experiments>3</experiments>
</comment>
<comment type="interaction">
    <interactant intactId="EBI-12111050">
        <id>Q3LI64</id>
    </interactant>
    <interactant intactId="EBI-394558">
        <id>Q71SY5</id>
        <label>MED25</label>
    </interactant>
    <organismsDiffer>false</organismsDiffer>
    <experiments>3</experiments>
</comment>
<comment type="interaction">
    <interactant intactId="EBI-12111050">
        <id>Q3LI64</id>
    </interactant>
    <interactant intactId="EBI-8025850">
        <id>O14770-4</id>
        <label>MEIS2</label>
    </interactant>
    <organismsDiffer>false</organismsDiffer>
    <experiments>3</experiments>
</comment>
<comment type="interaction">
    <interactant intactId="EBI-12111050">
        <id>Q3LI64</id>
    </interactant>
    <interactant intactId="EBI-14086479">
        <id>Q8IVT4</id>
        <label>MGC50722</label>
    </interactant>
    <organismsDiffer>false</organismsDiffer>
    <experiments>3</experiments>
</comment>
<comment type="interaction">
    <interactant intactId="EBI-12111050">
        <id>Q3LI64</id>
    </interactant>
    <interactant intactId="EBI-5662487">
        <id>Q8TDC0</id>
        <label>MYOZ3</label>
    </interactant>
    <organismsDiffer>false</organismsDiffer>
    <experiments>3</experiments>
</comment>
<comment type="interaction">
    <interactant intactId="EBI-12111050">
        <id>Q3LI64</id>
    </interactant>
    <interactant intactId="EBI-2515597">
        <id>Q96HR8</id>
        <label>NAF1</label>
    </interactant>
    <organismsDiffer>false</organismsDiffer>
    <experiments>3</experiments>
</comment>
<comment type="interaction">
    <interactant intactId="EBI-12111050">
        <id>Q3LI64</id>
    </interactant>
    <interactant intactId="EBI-17490746">
        <id>A8MTQ0</id>
        <label>NOTO</label>
    </interactant>
    <organismsDiffer>false</organismsDiffer>
    <experiments>3</experiments>
</comment>
<comment type="interaction">
    <interactant intactId="EBI-12111050">
        <id>Q3LI64</id>
    </interactant>
    <interactant intactId="EBI-741158">
        <id>Q96HA8</id>
        <label>NTAQ1</label>
    </interactant>
    <organismsDiffer>false</organismsDiffer>
    <experiments>3</experiments>
</comment>
<comment type="interaction">
    <interactant intactId="EBI-12111050">
        <id>Q3LI64</id>
    </interactant>
    <interactant intactId="EBI-10225049">
        <id>Q7RTU3</id>
        <label>OLIG3</label>
    </interactant>
    <organismsDiffer>false</organismsDiffer>
    <experiments>3</experiments>
</comment>
<comment type="interaction">
    <interactant intactId="EBI-12111050">
        <id>Q3LI64</id>
    </interactant>
    <interactant intactId="EBI-12850348">
        <id>Q8N2R0-2</id>
        <label>OSR2</label>
    </interactant>
    <organismsDiffer>false</organismsDiffer>
    <experiments>3</experiments>
</comment>
<comment type="interaction">
    <interactant intactId="EBI-12111050">
        <id>Q3LI64</id>
    </interactant>
    <interactant intactId="EBI-740446">
        <id>P32242</id>
        <label>OTX1</label>
    </interactant>
    <organismsDiffer>false</organismsDiffer>
    <experiments>3</experiments>
</comment>
<comment type="interaction">
    <interactant intactId="EBI-12111050">
        <id>Q3LI64</id>
    </interactant>
    <interactant intactId="EBI-10181968">
        <id>Q7Z4N8</id>
        <label>P4HA3</label>
    </interactant>
    <organismsDiffer>false</organismsDiffer>
    <experiments>3</experiments>
</comment>
<comment type="interaction">
    <interactant intactId="EBI-12111050">
        <id>Q3LI64</id>
    </interactant>
    <interactant intactId="EBI-11022007">
        <id>Q9HBE1-4</id>
        <label>PATZ1</label>
    </interactant>
    <organismsDiffer>false</organismsDiffer>
    <experiments>3</experiments>
</comment>
<comment type="interaction">
    <interactant intactId="EBI-12111050">
        <id>Q3LI64</id>
    </interactant>
    <interactant intactId="EBI-1752525">
        <id>Q13087</id>
        <label>PDIA2</label>
    </interactant>
    <organismsDiffer>false</organismsDiffer>
    <experiments>3</experiments>
</comment>
<comment type="interaction">
    <interactant intactId="EBI-12111050">
        <id>Q3LI64</id>
    </interactant>
    <interactant intactId="EBI-748265">
        <id>P78337</id>
        <label>PITX1</label>
    </interactant>
    <organismsDiffer>false</organismsDiffer>
    <experiments>3</experiments>
</comment>
<comment type="interaction">
    <interactant intactId="EBI-12111050">
        <id>Q3LI64</id>
    </interactant>
    <interactant intactId="EBI-12138495">
        <id>Q99697-2</id>
        <label>PITX2</label>
    </interactant>
    <organismsDiffer>false</organismsDiffer>
    <experiments>3</experiments>
</comment>
<comment type="interaction">
    <interactant intactId="EBI-12111050">
        <id>Q3LI64</id>
    </interactant>
    <interactant intactId="EBI-750734">
        <id>Q9NRY6</id>
        <label>PLSCR3</label>
    </interactant>
    <organismsDiffer>false</organismsDiffer>
    <experiments>3</experiments>
</comment>
<comment type="interaction">
    <interactant intactId="EBI-12111050">
        <id>Q3LI64</id>
    </interactant>
    <interactant intactId="EBI-769257">
        <id>Q9NRQ2</id>
        <label>PLSCR4</label>
    </interactant>
    <organismsDiffer>false</organismsDiffer>
    <experiments>4</experiments>
</comment>
<comment type="interaction">
    <interactant intactId="EBI-12111050">
        <id>Q3LI64</id>
    </interactant>
    <interactant intactId="EBI-8673859">
        <id>P28069</id>
        <label>POU1F1</label>
    </interactant>
    <organismsDiffer>false</organismsDiffer>
    <experiments>3</experiments>
</comment>
<comment type="interaction">
    <interactant intactId="EBI-12111050">
        <id>Q3LI64</id>
    </interactant>
    <interactant intactId="EBI-17236143">
        <id>Q12837</id>
        <label>POU4F2</label>
    </interactant>
    <organismsDiffer>false</organismsDiffer>
    <experiments>3</experiments>
</comment>
<comment type="interaction">
    <interactant intactId="EBI-12111050">
        <id>Q3LI64</id>
    </interactant>
    <interactant intactId="EBI-740924">
        <id>Q9NZ81</id>
        <label>PRR13</label>
    </interactant>
    <organismsDiffer>false</organismsDiffer>
    <experiments>5</experiments>
</comment>
<comment type="interaction">
    <interactant intactId="EBI-12111050">
        <id>Q3LI64</id>
    </interactant>
    <interactant intactId="EBI-11986293">
        <id>P0CG20</id>
        <label>PRR35</label>
    </interactant>
    <organismsDiffer>false</organismsDiffer>
    <experiments>3</experiments>
</comment>
<comment type="interaction">
    <interactant intactId="EBI-12111050">
        <id>Q3LI64</id>
    </interactant>
    <interactant intactId="EBI-11987469">
        <id>Q6ZRY4</id>
        <label>RBPMS2</label>
    </interactant>
    <organismsDiffer>false</organismsDiffer>
    <experiments>3</experiments>
</comment>
<comment type="interaction">
    <interactant intactId="EBI-12111050">
        <id>Q3LI64</id>
    </interactant>
    <interactant intactId="EBI-372094">
        <id>Q9BQY4</id>
        <label>RHOXF2</label>
    </interactant>
    <organismsDiffer>false</organismsDiffer>
    <experiments>5</experiments>
</comment>
<comment type="interaction">
    <interactant intactId="EBI-12111050">
        <id>Q3LI64</id>
    </interactant>
    <interactant intactId="EBI-355653">
        <id>Q92922</id>
        <label>SMARCC1</label>
    </interactant>
    <organismsDiffer>false</organismsDiffer>
    <experiments>3</experiments>
</comment>
<comment type="interaction">
    <interactant intactId="EBI-12111050">
        <id>Q3LI64</id>
    </interactant>
    <interactant intactId="EBI-395421">
        <id>Q16637</id>
        <label>SMN2</label>
    </interactant>
    <organismsDiffer>false</organismsDiffer>
    <experiments>3</experiments>
</comment>
<comment type="interaction">
    <interactant intactId="EBI-12111050">
        <id>Q3LI64</id>
    </interactant>
    <interactant intactId="EBI-372475">
        <id>P14678-2</id>
        <label>SNRPB</label>
    </interactant>
    <organismsDiffer>false</organismsDiffer>
    <experiments>3</experiments>
</comment>
<comment type="interaction">
    <interactant intactId="EBI-12111050">
        <id>Q3LI64</id>
    </interactant>
    <interactant intactId="EBI-11746252">
        <id>Q9NQB0-10</id>
        <label>TCF7L2</label>
    </interactant>
    <organismsDiffer>false</organismsDiffer>
    <experiments>3</experiments>
</comment>
<comment type="interaction">
    <interactant intactId="EBI-12111050">
        <id>Q3LI64</id>
    </interactant>
    <interactant intactId="EBI-8644516">
        <id>Q9BXF9</id>
        <label>TEKT3</label>
    </interactant>
    <organismsDiffer>false</organismsDiffer>
    <experiments>3</experiments>
</comment>
<comment type="interaction">
    <interactant intactId="EBI-12111050">
        <id>Q3LI64</id>
    </interactant>
    <interactant intactId="EBI-752030">
        <id>Q96A09</id>
        <label>TENT5B</label>
    </interactant>
    <organismsDiffer>false</organismsDiffer>
    <experiments>3</experiments>
</comment>
<comment type="interaction">
    <interactant intactId="EBI-12111050">
        <id>Q3LI64</id>
    </interactant>
    <interactant intactId="EBI-11952651">
        <id>Q7Z6R9</id>
        <label>TFAP2D</label>
    </interactant>
    <organismsDiffer>false</organismsDiffer>
    <experiments>3</experiments>
</comment>
<comment type="interaction">
    <interactant intactId="EBI-12111050">
        <id>Q3LI64</id>
    </interactant>
    <interactant intactId="EBI-3939165">
        <id>O43711</id>
        <label>TLX3</label>
    </interactant>
    <organismsDiffer>false</organismsDiffer>
    <experiments>3</experiments>
</comment>
<comment type="interaction">
    <interactant intactId="EBI-12111050">
        <id>Q3LI64</id>
    </interactant>
    <interactant intactId="EBI-357849">
        <id>Q15025</id>
        <label>TNIP1</label>
    </interactant>
    <organismsDiffer>false</organismsDiffer>
    <experiments>3</experiments>
</comment>
<comment type="interaction">
    <interactant intactId="EBI-12111050">
        <id>Q3LI64</id>
    </interactant>
    <interactant intactId="EBI-74615">
        <id>Q9H0E2</id>
        <label>TOLLIP</label>
    </interactant>
    <organismsDiffer>false</organismsDiffer>
    <experiments>5</experiments>
</comment>
<comment type="interaction">
    <interactant intactId="EBI-12111050">
        <id>Q3LI64</id>
    </interactant>
    <interactant intactId="EBI-719893">
        <id>Q8WVR3</id>
        <label>TRAPPC14</label>
    </interactant>
    <organismsDiffer>false</organismsDiffer>
    <experiments>3</experiments>
</comment>
<comment type="interaction">
    <interactant intactId="EBI-12111050">
        <id>Q3LI64</id>
    </interactant>
    <interactant intactId="EBI-358993">
        <id>Q15645</id>
        <label>TRIP13</label>
    </interactant>
    <organismsDiffer>false</organismsDiffer>
    <experiments>4</experiments>
</comment>
<comment type="interaction">
    <interactant intactId="EBI-12111050">
        <id>Q3LI64</id>
    </interactant>
    <interactant intactId="EBI-12238241">
        <id>Q8IV45</id>
        <label>UNC5CL</label>
    </interactant>
    <organismsDiffer>false</organismsDiffer>
    <experiments>3</experiments>
</comment>
<comment type="interaction">
    <interactant intactId="EBI-12111050">
        <id>Q3LI64</id>
    </interactant>
    <interactant intactId="EBI-2107455">
        <id>Q08AM6</id>
        <label>VAC14</label>
    </interactant>
    <organismsDiffer>false</organismsDiffer>
    <experiments>3</experiments>
</comment>
<comment type="interaction">
    <interactant intactId="EBI-12111050">
        <id>Q3LI64</id>
    </interactant>
    <interactant intactId="EBI-10191303">
        <id>O95231</id>
        <label>VENTX</label>
    </interactant>
    <organismsDiffer>false</organismsDiffer>
    <experiments>3</experiments>
</comment>
<comment type="interaction">
    <interactant intactId="EBI-12111050">
        <id>Q3LI64</id>
    </interactant>
    <interactant intactId="EBI-11957216">
        <id>A8MV65-2</id>
        <label>VGLL3</label>
    </interactant>
    <organismsDiffer>false</organismsDiffer>
    <experiments>3</experiments>
</comment>
<comment type="interaction">
    <interactant intactId="EBI-12111050">
        <id>Q3LI64</id>
    </interactant>
    <interactant intactId="EBI-2559305">
        <id>A5D8V6</id>
        <label>VPS37C</label>
    </interactant>
    <organismsDiffer>false</organismsDiffer>
    <experiments>3</experiments>
</comment>
<comment type="interaction">
    <interactant intactId="EBI-12111050">
        <id>Q3LI64</id>
    </interactant>
    <interactant intactId="EBI-10188476">
        <id>A0A0C4DGF1</id>
        <label>ZBTB32</label>
    </interactant>
    <organismsDiffer>false</organismsDiffer>
    <experiments>5</experiments>
</comment>
<comment type="interaction">
    <interactant intactId="EBI-12111050">
        <id>Q3LI64</id>
    </interactant>
    <interactant intactId="EBI-742550">
        <id>Q96K80</id>
        <label>ZC3H10</label>
    </interactant>
    <organismsDiffer>false</organismsDiffer>
    <experiments>3</experiments>
</comment>
<comment type="interaction">
    <interactant intactId="EBI-12111050">
        <id>Q3LI64</id>
    </interactant>
    <interactant intactId="EBI-11963196">
        <id>Q15915</id>
        <label>ZIC1</label>
    </interactant>
    <organismsDiffer>false</organismsDiffer>
    <experiments>3</experiments>
</comment>
<comment type="interaction">
    <interactant intactId="EBI-12111050">
        <id>Q3LI64</id>
    </interactant>
    <interactant intactId="EBI-744257">
        <id>Q96IQ9</id>
        <label>ZNF414</label>
    </interactant>
    <organismsDiffer>false</organismsDiffer>
    <experiments>5</experiments>
</comment>
<comment type="similarity">
    <text evidence="2">Belongs to the KRTAP type 6 family.</text>
</comment>
<evidence type="ECO:0000250" key="1"/>
<evidence type="ECO:0000305" key="2"/>
<name>KRA61_HUMAN</name>
<feature type="chain" id="PRO_0000223898" description="Keratin-associated protein 6-1">
    <location>
        <begin position="1"/>
        <end position="71"/>
    </location>
</feature>
<gene>
    <name type="primary">KRTAP6-1</name>
    <name type="synonym">C21orf103</name>
    <name type="synonym">KAP6.1</name>
</gene>
<dbReference type="EMBL" id="AB096954">
    <property type="protein sequence ID" value="BAE46369.1"/>
    <property type="molecule type" value="mRNA"/>
</dbReference>
<dbReference type="CCDS" id="CCDS13602.1"/>
<dbReference type="RefSeq" id="NP_853633.1">
    <property type="nucleotide sequence ID" value="NM_181602.2"/>
</dbReference>
<dbReference type="BioGRID" id="130649">
    <property type="interactions" value="104"/>
</dbReference>
<dbReference type="FunCoup" id="Q3LI64">
    <property type="interactions" value="14"/>
</dbReference>
<dbReference type="IntAct" id="Q3LI64">
    <property type="interactions" value="98"/>
</dbReference>
<dbReference type="STRING" id="9606.ENSP00000332690"/>
<dbReference type="GlyGen" id="Q3LI64">
    <property type="glycosylation" value="1 site"/>
</dbReference>
<dbReference type="iPTMnet" id="Q3LI64"/>
<dbReference type="PhosphoSitePlus" id="Q3LI64"/>
<dbReference type="BioMuta" id="KRTAP6-1"/>
<dbReference type="MassIVE" id="Q3LI64"/>
<dbReference type="PaxDb" id="9606-ENSP00000332690"/>
<dbReference type="PeptideAtlas" id="Q3LI64"/>
<dbReference type="ProteomicsDB" id="61765"/>
<dbReference type="DNASU" id="337966"/>
<dbReference type="Ensembl" id="ENST00000329122.2">
    <property type="protein sequence ID" value="ENSP00000332690.2"/>
    <property type="gene ID" value="ENSG00000184724.5"/>
</dbReference>
<dbReference type="GeneID" id="337966"/>
<dbReference type="KEGG" id="hsa:337966"/>
<dbReference type="MANE-Select" id="ENST00000329122.2">
    <property type="protein sequence ID" value="ENSP00000332690.2"/>
    <property type="RefSeq nucleotide sequence ID" value="NM_181602.2"/>
    <property type="RefSeq protein sequence ID" value="NP_853633.1"/>
</dbReference>
<dbReference type="UCSC" id="uc002yop.4">
    <property type="organism name" value="human"/>
</dbReference>
<dbReference type="AGR" id="HGNC:18931"/>
<dbReference type="CTD" id="337966"/>
<dbReference type="GeneCards" id="KRTAP6-1"/>
<dbReference type="HGNC" id="HGNC:18931">
    <property type="gene designation" value="KRTAP6-1"/>
</dbReference>
<dbReference type="HPA" id="ENSG00000184724">
    <property type="expression patterns" value="Tissue enriched (skin)"/>
</dbReference>
<dbReference type="neXtProt" id="NX_Q3LI64"/>
<dbReference type="PharmGKB" id="PA134988301"/>
<dbReference type="VEuPathDB" id="HostDB:ENSG00000184724"/>
<dbReference type="eggNOG" id="ENOG502TF3E">
    <property type="taxonomic scope" value="Eukaryota"/>
</dbReference>
<dbReference type="GeneTree" id="ENSGT00950000183372"/>
<dbReference type="HOGENOM" id="CLU_182642_0_0_1"/>
<dbReference type="InParanoid" id="Q3LI64"/>
<dbReference type="OMA" id="CGYGNGY"/>
<dbReference type="PAN-GO" id="Q3LI64">
    <property type="GO annotations" value="0 GO annotations based on evolutionary models"/>
</dbReference>
<dbReference type="PathwayCommons" id="Q3LI64"/>
<dbReference type="Reactome" id="R-HSA-6805567">
    <property type="pathway name" value="Keratinization"/>
</dbReference>
<dbReference type="SignaLink" id="Q3LI64"/>
<dbReference type="BioGRID-ORCS" id="337966">
    <property type="hits" value="10 hits in 1134 CRISPR screens"/>
</dbReference>
<dbReference type="GenomeRNAi" id="337966"/>
<dbReference type="Pharos" id="Q3LI64">
    <property type="development level" value="Tdark"/>
</dbReference>
<dbReference type="PRO" id="PR:Q3LI64"/>
<dbReference type="Proteomes" id="UP000005640">
    <property type="component" value="Chromosome 21"/>
</dbReference>
<dbReference type="RNAct" id="Q3LI64">
    <property type="molecule type" value="protein"/>
</dbReference>
<dbReference type="Bgee" id="ENSG00000184724">
    <property type="expression patterns" value="Expressed in prefrontal cortex and 8 other cell types or tissues"/>
</dbReference>
<dbReference type="GO" id="GO:0005829">
    <property type="term" value="C:cytosol"/>
    <property type="evidence" value="ECO:0007005"/>
    <property type="project" value="UniProtKB"/>
</dbReference>
<dbReference type="GO" id="GO:0005882">
    <property type="term" value="C:intermediate filament"/>
    <property type="evidence" value="ECO:0007669"/>
    <property type="project" value="UniProtKB-KW"/>
</dbReference>
<dbReference type="GO" id="GO:0031424">
    <property type="term" value="P:keratinization"/>
    <property type="evidence" value="ECO:0007669"/>
    <property type="project" value="InterPro"/>
</dbReference>
<dbReference type="InterPro" id="IPR040313">
    <property type="entry name" value="KAP6"/>
</dbReference>
<dbReference type="PANTHER" id="PTHR31678:SF2">
    <property type="entry name" value="KERATIN-ASSOCIATED PROTEIN 6-1"/>
    <property type="match status" value="1"/>
</dbReference>
<dbReference type="PANTHER" id="PTHR31678">
    <property type="entry name" value="KERATIN-ASSOCIATED PROTEIN 6-3"/>
    <property type="match status" value="1"/>
</dbReference>